<keyword id="KW-0150">Chloroplast</keyword>
<keyword id="KW-0249">Electron transport</keyword>
<keyword id="KW-0472">Membrane</keyword>
<keyword id="KW-0602">Photosynthesis</keyword>
<keyword id="KW-0934">Plastid</keyword>
<keyword id="KW-0793">Thylakoid</keyword>
<keyword id="KW-0812">Transmembrane</keyword>
<keyword id="KW-1133">Transmembrane helix</keyword>
<keyword id="KW-0813">Transport</keyword>
<evidence type="ECO:0000255" key="1">
    <source>
        <dbReference type="HAMAP-Rule" id="MF_00395"/>
    </source>
</evidence>
<geneLocation type="chloroplast"/>
<name>PETN_GNEPA</name>
<reference key="1">
    <citation type="journal article" date="2007" name="Mol. Biol. Evol.">
        <title>Chloroplast genome (cpDNA) of Cycas taitungensis and 56 cp protein-coding genes of Gnetum parvifolium: insights into cpDNA evolution and phylogeny of extant seed plants.</title>
        <authorList>
            <person name="Wu C.-S."/>
            <person name="Wang Y.-N."/>
            <person name="Liu S.-M."/>
            <person name="Chaw S.-M."/>
        </authorList>
    </citation>
    <scope>NUCLEOTIDE SEQUENCE [LARGE SCALE GENOMIC DNA]</scope>
</reference>
<reference key="2">
    <citation type="journal article" date="2009" name="Mol. Phylogenet. Evol.">
        <title>Evolution of reduced and compact chloroplast genomes (cpDNAs) in gnetophytes: Selection toward a lower-cost strategy.</title>
        <authorList>
            <person name="Wu C.-S."/>
            <person name="Lai Y.-T."/>
            <person name="Lin C.-P."/>
            <person name="Wang Y.-N."/>
            <person name="Chaw S.-M."/>
        </authorList>
    </citation>
    <scope>NUCLEOTIDE SEQUENCE [LARGE SCALE GENOMIC DNA]</scope>
</reference>
<organism>
    <name type="scientific">Gnetum parvifolium</name>
    <name type="common">Small-leaved jointfir</name>
    <name type="synonym">Gnetum scandens var. parvifolium</name>
    <dbReference type="NCBI Taxonomy" id="33153"/>
    <lineage>
        <taxon>Eukaryota</taxon>
        <taxon>Viridiplantae</taxon>
        <taxon>Streptophyta</taxon>
        <taxon>Embryophyta</taxon>
        <taxon>Tracheophyta</taxon>
        <taxon>Spermatophyta</taxon>
        <taxon>Gnetopsida</taxon>
        <taxon>Gnetidae</taxon>
        <taxon>Gnetales</taxon>
        <taxon>Gnetaceae</taxon>
        <taxon>Gnetum</taxon>
    </lineage>
</organism>
<gene>
    <name evidence="1" type="primary">petN</name>
</gene>
<protein>
    <recommendedName>
        <fullName evidence="1">Cytochrome b6-f complex subunit 8</fullName>
    </recommendedName>
    <alternativeName>
        <fullName evidence="1">Cytochrome b6-f complex subunit PetN</fullName>
    </alternativeName>
    <alternativeName>
        <fullName evidence="1">Cytochrome b6-f complex subunit VIII</fullName>
    </alternativeName>
</protein>
<comment type="function">
    <text evidence="1">Component of the cytochrome b6-f complex, which mediates electron transfer between photosystem II (PSII) and photosystem I (PSI), cyclic electron flow around PSI, and state transitions.</text>
</comment>
<comment type="subunit">
    <text evidence="1">The 4 large subunits of the cytochrome b6-f complex are cytochrome b6, subunit IV (17 kDa polypeptide, PetD), cytochrome f and the Rieske protein, while the 4 small subunits are PetG, PetL, PetM and PetN. The complex functions as a dimer.</text>
</comment>
<comment type="subcellular location">
    <subcellularLocation>
        <location evidence="1">Plastid</location>
        <location evidence="1">Chloroplast thylakoid membrane</location>
        <topology evidence="1">Single-pass membrane protein</topology>
    </subcellularLocation>
</comment>
<comment type="similarity">
    <text evidence="1">Belongs to the PetN family.</text>
</comment>
<proteinExistence type="inferred from homology"/>
<feature type="chain" id="PRO_0000355440" description="Cytochrome b6-f complex subunit 8">
    <location>
        <begin position="1"/>
        <end position="29"/>
    </location>
</feature>
<feature type="transmembrane region" description="Helical" evidence="1">
    <location>
        <begin position="3"/>
        <end position="23"/>
    </location>
</feature>
<sequence>MNIVDIAWAALMVVFTFSLSLVVWGRSGL</sequence>
<dbReference type="EMBL" id="AB295918">
    <property type="protein sequence ID" value="BAF64867.1"/>
    <property type="molecule type" value="Genomic_DNA"/>
</dbReference>
<dbReference type="EMBL" id="AP009569">
    <property type="protein sequence ID" value="BAH11299.1"/>
    <property type="molecule type" value="Genomic_DNA"/>
</dbReference>
<dbReference type="RefSeq" id="YP_002519788.1">
    <property type="nucleotide sequence ID" value="NC_011942.1"/>
</dbReference>
<dbReference type="SMR" id="A6BM22"/>
<dbReference type="GeneID" id="7368178"/>
<dbReference type="GO" id="GO:0009535">
    <property type="term" value="C:chloroplast thylakoid membrane"/>
    <property type="evidence" value="ECO:0007669"/>
    <property type="project" value="UniProtKB-SubCell"/>
</dbReference>
<dbReference type="GO" id="GO:0009512">
    <property type="term" value="C:cytochrome b6f complex"/>
    <property type="evidence" value="ECO:0007669"/>
    <property type="project" value="InterPro"/>
</dbReference>
<dbReference type="GO" id="GO:0045158">
    <property type="term" value="F:electron transporter, transferring electrons within cytochrome b6/f complex of photosystem II activity"/>
    <property type="evidence" value="ECO:0007669"/>
    <property type="project" value="InterPro"/>
</dbReference>
<dbReference type="GO" id="GO:0017004">
    <property type="term" value="P:cytochrome complex assembly"/>
    <property type="evidence" value="ECO:0007669"/>
    <property type="project" value="UniProtKB-UniRule"/>
</dbReference>
<dbReference type="GO" id="GO:0015979">
    <property type="term" value="P:photosynthesis"/>
    <property type="evidence" value="ECO:0007669"/>
    <property type="project" value="UniProtKB-KW"/>
</dbReference>
<dbReference type="HAMAP" id="MF_00395">
    <property type="entry name" value="Cytb6_f_PetN"/>
    <property type="match status" value="1"/>
</dbReference>
<dbReference type="InterPro" id="IPR036143">
    <property type="entry name" value="Cytochr_b6-f_cplx_su8_sf"/>
</dbReference>
<dbReference type="InterPro" id="IPR005497">
    <property type="entry name" value="Cytochrome_b6-f_cplx_su8"/>
</dbReference>
<dbReference type="Pfam" id="PF03742">
    <property type="entry name" value="PetN"/>
    <property type="match status" value="1"/>
</dbReference>
<dbReference type="SUPFAM" id="SSF103451">
    <property type="entry name" value="PetN subunit of the cytochrome b6f complex"/>
    <property type="match status" value="1"/>
</dbReference>
<accession>A6BM22</accession>
<accession>B7ZIB9</accession>